<keyword id="KW-0963">Cytoplasm</keyword>
<keyword id="KW-0460">Magnesium</keyword>
<keyword id="KW-0479">Metal-binding</keyword>
<keyword id="KW-0548">Nucleotidyltransferase</keyword>
<keyword id="KW-0694">RNA-binding</keyword>
<keyword id="KW-0808">Transferase</keyword>
<gene>
    <name evidence="1" type="primary">pnp</name>
    <name type="ordered locus">BCA_3903</name>
</gene>
<dbReference type="EC" id="2.7.7.8" evidence="1"/>
<dbReference type="EMBL" id="CP001407">
    <property type="protein sequence ID" value="ACO31069.1"/>
    <property type="molecule type" value="Genomic_DNA"/>
</dbReference>
<dbReference type="RefSeq" id="WP_000076758.1">
    <property type="nucleotide sequence ID" value="NC_012472.1"/>
</dbReference>
<dbReference type="SMR" id="C1EP29"/>
<dbReference type="KEGG" id="bcx:BCA_3903"/>
<dbReference type="PATRIC" id="fig|572264.18.peg.3860"/>
<dbReference type="Proteomes" id="UP000002210">
    <property type="component" value="Chromosome"/>
</dbReference>
<dbReference type="GO" id="GO:0005829">
    <property type="term" value="C:cytosol"/>
    <property type="evidence" value="ECO:0007669"/>
    <property type="project" value="TreeGrafter"/>
</dbReference>
<dbReference type="GO" id="GO:0000175">
    <property type="term" value="F:3'-5'-RNA exonuclease activity"/>
    <property type="evidence" value="ECO:0007669"/>
    <property type="project" value="TreeGrafter"/>
</dbReference>
<dbReference type="GO" id="GO:0000287">
    <property type="term" value="F:magnesium ion binding"/>
    <property type="evidence" value="ECO:0007669"/>
    <property type="project" value="UniProtKB-UniRule"/>
</dbReference>
<dbReference type="GO" id="GO:0004654">
    <property type="term" value="F:polyribonucleotide nucleotidyltransferase activity"/>
    <property type="evidence" value="ECO:0007669"/>
    <property type="project" value="UniProtKB-UniRule"/>
</dbReference>
<dbReference type="GO" id="GO:0003723">
    <property type="term" value="F:RNA binding"/>
    <property type="evidence" value="ECO:0007669"/>
    <property type="project" value="UniProtKB-UniRule"/>
</dbReference>
<dbReference type="GO" id="GO:0006402">
    <property type="term" value="P:mRNA catabolic process"/>
    <property type="evidence" value="ECO:0007669"/>
    <property type="project" value="UniProtKB-UniRule"/>
</dbReference>
<dbReference type="GO" id="GO:0006396">
    <property type="term" value="P:RNA processing"/>
    <property type="evidence" value="ECO:0007669"/>
    <property type="project" value="InterPro"/>
</dbReference>
<dbReference type="CDD" id="cd02393">
    <property type="entry name" value="KH-I_PNPase"/>
    <property type="match status" value="1"/>
</dbReference>
<dbReference type="CDD" id="cd11363">
    <property type="entry name" value="RNase_PH_PNPase_1"/>
    <property type="match status" value="1"/>
</dbReference>
<dbReference type="CDD" id="cd11364">
    <property type="entry name" value="RNase_PH_PNPase_2"/>
    <property type="match status" value="1"/>
</dbReference>
<dbReference type="CDD" id="cd04472">
    <property type="entry name" value="S1_PNPase"/>
    <property type="match status" value="1"/>
</dbReference>
<dbReference type="FunFam" id="2.40.50.140:FF:000023">
    <property type="entry name" value="Polyribonucleotide nucleotidyltransferase"/>
    <property type="match status" value="1"/>
</dbReference>
<dbReference type="FunFam" id="3.30.1370.10:FF:000001">
    <property type="entry name" value="Polyribonucleotide nucleotidyltransferase"/>
    <property type="match status" value="1"/>
</dbReference>
<dbReference type="FunFam" id="3.30.230.70:FF:000001">
    <property type="entry name" value="Polyribonucleotide nucleotidyltransferase"/>
    <property type="match status" value="1"/>
</dbReference>
<dbReference type="FunFam" id="3.30.230.70:FF:000002">
    <property type="entry name" value="Polyribonucleotide nucleotidyltransferase"/>
    <property type="match status" value="1"/>
</dbReference>
<dbReference type="Gene3D" id="3.30.230.70">
    <property type="entry name" value="GHMP Kinase, N-terminal domain"/>
    <property type="match status" value="2"/>
</dbReference>
<dbReference type="Gene3D" id="3.30.1370.10">
    <property type="entry name" value="K Homology domain, type 1"/>
    <property type="match status" value="1"/>
</dbReference>
<dbReference type="Gene3D" id="2.40.50.140">
    <property type="entry name" value="Nucleic acid-binding proteins"/>
    <property type="match status" value="1"/>
</dbReference>
<dbReference type="HAMAP" id="MF_01595">
    <property type="entry name" value="PNPase"/>
    <property type="match status" value="1"/>
</dbReference>
<dbReference type="InterPro" id="IPR001247">
    <property type="entry name" value="ExoRNase_PH_dom1"/>
</dbReference>
<dbReference type="InterPro" id="IPR015847">
    <property type="entry name" value="ExoRNase_PH_dom2"/>
</dbReference>
<dbReference type="InterPro" id="IPR036345">
    <property type="entry name" value="ExoRNase_PH_dom2_sf"/>
</dbReference>
<dbReference type="InterPro" id="IPR004087">
    <property type="entry name" value="KH_dom"/>
</dbReference>
<dbReference type="InterPro" id="IPR004088">
    <property type="entry name" value="KH_dom_type_1"/>
</dbReference>
<dbReference type="InterPro" id="IPR036612">
    <property type="entry name" value="KH_dom_type_1_sf"/>
</dbReference>
<dbReference type="InterPro" id="IPR012340">
    <property type="entry name" value="NA-bd_OB-fold"/>
</dbReference>
<dbReference type="InterPro" id="IPR012162">
    <property type="entry name" value="PNPase"/>
</dbReference>
<dbReference type="InterPro" id="IPR027408">
    <property type="entry name" value="PNPase/RNase_PH_dom_sf"/>
</dbReference>
<dbReference type="InterPro" id="IPR015848">
    <property type="entry name" value="PNPase_PH_RNA-bd_bac/org-type"/>
</dbReference>
<dbReference type="InterPro" id="IPR020568">
    <property type="entry name" value="Ribosomal_Su5_D2-typ_SF"/>
</dbReference>
<dbReference type="InterPro" id="IPR003029">
    <property type="entry name" value="S1_domain"/>
</dbReference>
<dbReference type="NCBIfam" id="TIGR03591">
    <property type="entry name" value="polynuc_phos"/>
    <property type="match status" value="1"/>
</dbReference>
<dbReference type="NCBIfam" id="NF008805">
    <property type="entry name" value="PRK11824.1"/>
    <property type="match status" value="1"/>
</dbReference>
<dbReference type="PANTHER" id="PTHR11252">
    <property type="entry name" value="POLYRIBONUCLEOTIDE NUCLEOTIDYLTRANSFERASE"/>
    <property type="match status" value="1"/>
</dbReference>
<dbReference type="PANTHER" id="PTHR11252:SF0">
    <property type="entry name" value="POLYRIBONUCLEOTIDE NUCLEOTIDYLTRANSFERASE 1, MITOCHONDRIAL"/>
    <property type="match status" value="1"/>
</dbReference>
<dbReference type="Pfam" id="PF00013">
    <property type="entry name" value="KH_1"/>
    <property type="match status" value="1"/>
</dbReference>
<dbReference type="Pfam" id="PF03726">
    <property type="entry name" value="PNPase"/>
    <property type="match status" value="1"/>
</dbReference>
<dbReference type="Pfam" id="PF01138">
    <property type="entry name" value="RNase_PH"/>
    <property type="match status" value="2"/>
</dbReference>
<dbReference type="Pfam" id="PF03725">
    <property type="entry name" value="RNase_PH_C"/>
    <property type="match status" value="2"/>
</dbReference>
<dbReference type="Pfam" id="PF00575">
    <property type="entry name" value="S1"/>
    <property type="match status" value="1"/>
</dbReference>
<dbReference type="PIRSF" id="PIRSF005499">
    <property type="entry name" value="PNPase"/>
    <property type="match status" value="1"/>
</dbReference>
<dbReference type="SMART" id="SM00322">
    <property type="entry name" value="KH"/>
    <property type="match status" value="1"/>
</dbReference>
<dbReference type="SMART" id="SM00316">
    <property type="entry name" value="S1"/>
    <property type="match status" value="1"/>
</dbReference>
<dbReference type="SUPFAM" id="SSF54791">
    <property type="entry name" value="Eukaryotic type KH-domain (KH-domain type I)"/>
    <property type="match status" value="1"/>
</dbReference>
<dbReference type="SUPFAM" id="SSF50249">
    <property type="entry name" value="Nucleic acid-binding proteins"/>
    <property type="match status" value="1"/>
</dbReference>
<dbReference type="SUPFAM" id="SSF55666">
    <property type="entry name" value="Ribonuclease PH domain 2-like"/>
    <property type="match status" value="2"/>
</dbReference>
<dbReference type="SUPFAM" id="SSF54211">
    <property type="entry name" value="Ribosomal protein S5 domain 2-like"/>
    <property type="match status" value="2"/>
</dbReference>
<dbReference type="PROSITE" id="PS50084">
    <property type="entry name" value="KH_TYPE_1"/>
    <property type="match status" value="1"/>
</dbReference>
<dbReference type="PROSITE" id="PS50126">
    <property type="entry name" value="S1"/>
    <property type="match status" value="1"/>
</dbReference>
<name>PNP_BACC3</name>
<feature type="chain" id="PRO_1000185721" description="Polyribonucleotide nucleotidyltransferase">
    <location>
        <begin position="1"/>
        <end position="712"/>
    </location>
</feature>
<feature type="domain" description="KH" evidence="1">
    <location>
        <begin position="554"/>
        <end position="613"/>
    </location>
</feature>
<feature type="domain" description="S1 motif" evidence="1">
    <location>
        <begin position="623"/>
        <end position="691"/>
    </location>
</feature>
<feature type="binding site" evidence="1">
    <location>
        <position position="487"/>
    </location>
    <ligand>
        <name>Mg(2+)</name>
        <dbReference type="ChEBI" id="CHEBI:18420"/>
    </ligand>
</feature>
<feature type="binding site" evidence="1">
    <location>
        <position position="493"/>
    </location>
    <ligand>
        <name>Mg(2+)</name>
        <dbReference type="ChEBI" id="CHEBI:18420"/>
    </ligand>
</feature>
<evidence type="ECO:0000255" key="1">
    <source>
        <dbReference type="HAMAP-Rule" id="MF_01595"/>
    </source>
</evidence>
<sequence length="712" mass="78211">MSQEKQVFSIDLAGRQLTVETGQLAKQANGAVLVRYGDTAVLSTATASKEAKNVDFFPLTVNYEERLYAVGKIPGGFIKREGRPSEKAILASRLIDRPIRPLFADGFRNEVQVVSIVMSVDQDCSSEMAAMLGSSLALSISDIPFEGPIAGTTVGRINGEFVINPTVEQQEQSDIHLVVAGTKDAINMVEAGADQVPEETMLEAIMFGHDEIKRLIAFQEEIVQAVGKEKSEVKLYEVDADLNQAVREMAEKDMHSAIQVHEKHAREDAINEVKKRVIEHYEAQEADADTLGQVNEILYKIVKEEVRRLITVEKIRPDGRKGDEIRPLASEVGILSRTHGSGLFTRGQTQALSICTLGALGDVQILDGLGVEESKRFMHHYNFPSFSVGETRPMRGPGRREIGHGALGERALEPVIPSEKDFPYTVRLVSEVLESNGSTSQASICGSTLAMMDAGVPLKAPVAGIAMGLVKTGEHYTILSDIQGMEDHLGDMDFKVAGTAHGVTALQMDIKIDGLSREILEEALQQAKVGRVHILNHMLSVIAEPRTELSAYAPKIITMTINPDKIRDVIGPSGKQINKIIEETGVKIDIEQDGTVFISSINQEMNDKAKKIIEDIVREVQVGEIYEGKVKRVEKFGAFVELFSGKDGLVHISELALERVGKVEDVVKIGDVITVKVIEIDKQGRVNLSRKVLLKEEQEKEAAKEENKQEQQ</sequence>
<organism>
    <name type="scientific">Bacillus cereus (strain 03BB102)</name>
    <dbReference type="NCBI Taxonomy" id="572264"/>
    <lineage>
        <taxon>Bacteria</taxon>
        <taxon>Bacillati</taxon>
        <taxon>Bacillota</taxon>
        <taxon>Bacilli</taxon>
        <taxon>Bacillales</taxon>
        <taxon>Bacillaceae</taxon>
        <taxon>Bacillus</taxon>
        <taxon>Bacillus cereus group</taxon>
    </lineage>
</organism>
<protein>
    <recommendedName>
        <fullName evidence="1">Polyribonucleotide nucleotidyltransferase</fullName>
        <ecNumber evidence="1">2.7.7.8</ecNumber>
    </recommendedName>
    <alternativeName>
        <fullName evidence="1">Polynucleotide phosphorylase</fullName>
        <shortName evidence="1">PNPase</shortName>
    </alternativeName>
</protein>
<comment type="function">
    <text evidence="1">Involved in mRNA degradation. Catalyzes the phosphorolysis of single-stranded polyribonucleotides processively in the 3'- to 5'-direction.</text>
</comment>
<comment type="catalytic activity">
    <reaction evidence="1">
        <text>RNA(n+1) + phosphate = RNA(n) + a ribonucleoside 5'-diphosphate</text>
        <dbReference type="Rhea" id="RHEA:22096"/>
        <dbReference type="Rhea" id="RHEA-COMP:14527"/>
        <dbReference type="Rhea" id="RHEA-COMP:17342"/>
        <dbReference type="ChEBI" id="CHEBI:43474"/>
        <dbReference type="ChEBI" id="CHEBI:57930"/>
        <dbReference type="ChEBI" id="CHEBI:140395"/>
        <dbReference type="EC" id="2.7.7.8"/>
    </reaction>
</comment>
<comment type="cofactor">
    <cofactor evidence="1">
        <name>Mg(2+)</name>
        <dbReference type="ChEBI" id="CHEBI:18420"/>
    </cofactor>
</comment>
<comment type="subcellular location">
    <subcellularLocation>
        <location evidence="1">Cytoplasm</location>
    </subcellularLocation>
</comment>
<comment type="similarity">
    <text evidence="1">Belongs to the polyribonucleotide nucleotidyltransferase family.</text>
</comment>
<proteinExistence type="inferred from homology"/>
<accession>C1EP29</accession>
<reference key="1">
    <citation type="submission" date="2009-02" db="EMBL/GenBank/DDBJ databases">
        <title>Genome sequence of Bacillus cereus 03BB102.</title>
        <authorList>
            <person name="Dodson R.J."/>
            <person name="Jackson P."/>
            <person name="Munk A.C."/>
            <person name="Brettin T."/>
            <person name="Bruce D."/>
            <person name="Detter C."/>
            <person name="Tapia R."/>
            <person name="Han C."/>
            <person name="Sutton G."/>
            <person name="Sims D."/>
        </authorList>
    </citation>
    <scope>NUCLEOTIDE SEQUENCE [LARGE SCALE GENOMIC DNA]</scope>
    <source>
        <strain>03BB102</strain>
    </source>
</reference>